<name>PAL4G_HUMAN</name>
<organism>
    <name type="scientific">Homo sapiens</name>
    <name type="common">Human</name>
    <dbReference type="NCBI Taxonomy" id="9606"/>
    <lineage>
        <taxon>Eukaryota</taxon>
        <taxon>Metazoa</taxon>
        <taxon>Chordata</taxon>
        <taxon>Craniata</taxon>
        <taxon>Vertebrata</taxon>
        <taxon>Euteleostomi</taxon>
        <taxon>Mammalia</taxon>
        <taxon>Eutheria</taxon>
        <taxon>Euarchontoglires</taxon>
        <taxon>Primates</taxon>
        <taxon>Haplorrhini</taxon>
        <taxon>Catarrhini</taxon>
        <taxon>Hominidae</taxon>
        <taxon>Homo</taxon>
    </lineage>
</organism>
<protein>
    <recommendedName>
        <fullName evidence="4">Peptidyl-prolyl cis-trans isomerase A-like 4G</fullName>
        <shortName>PPIase A-like 4G</shortName>
        <ecNumber>5.2.1.8</ecNumber>
    </recommendedName>
    <alternativeName>
        <fullName>Peptidylprolyl cis-trans isomerase A-like 4</fullName>
    </alternativeName>
</protein>
<dbReference type="EC" id="5.2.1.8"/>
<dbReference type="EMBL" id="BX284650">
    <property type="protein sequence ID" value="CAM26887.1"/>
    <property type="molecule type" value="Genomic_DNA"/>
</dbReference>
<dbReference type="CCDS" id="CCDS41375.2"/>
<dbReference type="RefSeq" id="NP_001116540.1">
    <property type="nucleotide sequence ID" value="NM_001123068.3"/>
</dbReference>
<dbReference type="SMR" id="P0DN37"/>
<dbReference type="FunCoup" id="P0DN37">
    <property type="interactions" value="77"/>
</dbReference>
<dbReference type="IntAct" id="P0DN37">
    <property type="interactions" value="25"/>
</dbReference>
<dbReference type="STRING" id="9606.ENSP00000393845"/>
<dbReference type="GlyGen" id="P0DN37">
    <property type="glycosylation" value="1 site, 1 N-linked glycan (1 site)"/>
</dbReference>
<dbReference type="iPTMnet" id="P0DN37"/>
<dbReference type="PhosphoSitePlus" id="P0DN37"/>
<dbReference type="BioMuta" id="PPIAL4G"/>
<dbReference type="jPOST" id="P0DN37"/>
<dbReference type="MassIVE" id="P0DN37"/>
<dbReference type="PaxDb" id="9606-ENSP00000393845"/>
<dbReference type="PeptideAtlas" id="P0DN37"/>
<dbReference type="Antibodypedia" id="67885">
    <property type="antibodies" value="72 antibodies from 11 providers"/>
</dbReference>
<dbReference type="DNASU" id="644591"/>
<dbReference type="Ensembl" id="ENST00000419275.3">
    <property type="protein sequence ID" value="ENSP00000393845.1"/>
    <property type="gene ID" value="ENSG00000236334.3"/>
</dbReference>
<dbReference type="GeneID" id="644591"/>
<dbReference type="KEGG" id="hsa:644591"/>
<dbReference type="MANE-Select" id="ENST00000419275.3">
    <property type="protein sequence ID" value="ENSP00000393845.1"/>
    <property type="RefSeq nucleotide sequence ID" value="NM_001123068.3"/>
    <property type="RefSeq protein sequence ID" value="NP_001116540.1"/>
</dbReference>
<dbReference type="AGR" id="HGNC:33996"/>
<dbReference type="CTD" id="644591"/>
<dbReference type="GeneCards" id="PPIAL4G"/>
<dbReference type="HGNC" id="HGNC:33996">
    <property type="gene designation" value="PPIAL4G"/>
</dbReference>
<dbReference type="HPA" id="ENSG00000236334">
    <property type="expression patterns" value="Tissue enhanced (intestine)"/>
</dbReference>
<dbReference type="neXtProt" id="NX_P0DN37"/>
<dbReference type="OpenTargets" id="ENSG00000236334"/>
<dbReference type="VEuPathDB" id="HostDB:ENSG00000236334"/>
<dbReference type="eggNOG" id="KOG0865">
    <property type="taxonomic scope" value="Eukaryota"/>
</dbReference>
<dbReference type="GeneTree" id="ENSGT00950000183087"/>
<dbReference type="InParanoid" id="P0DN37"/>
<dbReference type="OMA" id="CFHRIIW"/>
<dbReference type="OrthoDB" id="9458476at2759"/>
<dbReference type="PAN-GO" id="P0DN37">
    <property type="GO annotations" value="6 GO annotations based on evolutionary models"/>
</dbReference>
<dbReference type="PhylomeDB" id="P0DN37"/>
<dbReference type="PathwayCommons" id="P0DN37"/>
<dbReference type="SignaLink" id="P0DN37"/>
<dbReference type="BioGRID-ORCS" id="644591">
    <property type="hits" value="252 hits in 1027 CRISPR screens"/>
</dbReference>
<dbReference type="GenomeRNAi" id="644591"/>
<dbReference type="Pharos" id="P0DN37">
    <property type="development level" value="Tdark"/>
</dbReference>
<dbReference type="PRO" id="PR:P0DN37"/>
<dbReference type="Proteomes" id="UP000005640">
    <property type="component" value="Chromosome 1"/>
</dbReference>
<dbReference type="RNAct" id="P0DN37">
    <property type="molecule type" value="protein"/>
</dbReference>
<dbReference type="Bgee" id="ENSG00000236334">
    <property type="expression patterns" value="Expressed in primordial germ cell in gonad and 90 other cell types or tissues"/>
</dbReference>
<dbReference type="GO" id="GO:0005737">
    <property type="term" value="C:cytoplasm"/>
    <property type="evidence" value="ECO:0000318"/>
    <property type="project" value="GO_Central"/>
</dbReference>
<dbReference type="GO" id="GO:0016018">
    <property type="term" value="F:cyclosporin A binding"/>
    <property type="evidence" value="ECO:0000318"/>
    <property type="project" value="GO_Central"/>
</dbReference>
<dbReference type="GO" id="GO:0003755">
    <property type="term" value="F:peptidyl-prolyl cis-trans isomerase activity"/>
    <property type="evidence" value="ECO:0000318"/>
    <property type="project" value="GO_Central"/>
</dbReference>
<dbReference type="GO" id="GO:0006457">
    <property type="term" value="P:protein folding"/>
    <property type="evidence" value="ECO:0000318"/>
    <property type="project" value="GO_Central"/>
</dbReference>
<dbReference type="FunFam" id="2.40.100.10:FF:000011">
    <property type="entry name" value="Peptidyl-prolyl cis-trans isomerase A"/>
    <property type="match status" value="1"/>
</dbReference>
<dbReference type="Gene3D" id="2.40.100.10">
    <property type="entry name" value="Cyclophilin-like"/>
    <property type="match status" value="1"/>
</dbReference>
<dbReference type="InterPro" id="IPR029000">
    <property type="entry name" value="Cyclophilin-like_dom_sf"/>
</dbReference>
<dbReference type="InterPro" id="IPR024936">
    <property type="entry name" value="Cyclophilin-type_PPIase"/>
</dbReference>
<dbReference type="InterPro" id="IPR020892">
    <property type="entry name" value="Cyclophilin-type_PPIase_CS"/>
</dbReference>
<dbReference type="InterPro" id="IPR002130">
    <property type="entry name" value="Cyclophilin-type_PPIase_dom"/>
</dbReference>
<dbReference type="PANTHER" id="PTHR11071">
    <property type="entry name" value="PEPTIDYL-PROLYL CIS-TRANS ISOMERASE"/>
    <property type="match status" value="1"/>
</dbReference>
<dbReference type="PANTHER" id="PTHR11071:SF466">
    <property type="entry name" value="PEPTIDYL-PROLYL CIS-TRANS ISOMERASE A-LIKE 4C-RELATED"/>
    <property type="match status" value="1"/>
</dbReference>
<dbReference type="Pfam" id="PF00160">
    <property type="entry name" value="Pro_isomerase"/>
    <property type="match status" value="1"/>
</dbReference>
<dbReference type="PIRSF" id="PIRSF001467">
    <property type="entry name" value="Peptidylpro_ismrse"/>
    <property type="match status" value="1"/>
</dbReference>
<dbReference type="PRINTS" id="PR00153">
    <property type="entry name" value="CSAPPISMRASE"/>
</dbReference>
<dbReference type="SUPFAM" id="SSF50891">
    <property type="entry name" value="Cyclophilin-like"/>
    <property type="match status" value="1"/>
</dbReference>
<dbReference type="PROSITE" id="PS00170">
    <property type="entry name" value="CSA_PPIASE_1"/>
    <property type="match status" value="1"/>
</dbReference>
<dbReference type="PROSITE" id="PS50072">
    <property type="entry name" value="CSA_PPIASE_2"/>
    <property type="match status" value="1"/>
</dbReference>
<reference key="1">
    <citation type="journal article" date="2006" name="Nature">
        <title>The DNA sequence and biological annotation of human chromosome 1.</title>
        <authorList>
            <person name="Gregory S.G."/>
            <person name="Barlow K.F."/>
            <person name="McLay K.E."/>
            <person name="Kaul R."/>
            <person name="Swarbreck D."/>
            <person name="Dunham A."/>
            <person name="Scott C.E."/>
            <person name="Howe K.L."/>
            <person name="Woodfine K."/>
            <person name="Spencer C.C.A."/>
            <person name="Jones M.C."/>
            <person name="Gillson C."/>
            <person name="Searle S."/>
            <person name="Zhou Y."/>
            <person name="Kokocinski F."/>
            <person name="McDonald L."/>
            <person name="Evans R."/>
            <person name="Phillips K."/>
            <person name="Atkinson A."/>
            <person name="Cooper R."/>
            <person name="Jones C."/>
            <person name="Hall R.E."/>
            <person name="Andrews T.D."/>
            <person name="Lloyd C."/>
            <person name="Ainscough R."/>
            <person name="Almeida J.P."/>
            <person name="Ambrose K.D."/>
            <person name="Anderson F."/>
            <person name="Andrew R.W."/>
            <person name="Ashwell R.I.S."/>
            <person name="Aubin K."/>
            <person name="Babbage A.K."/>
            <person name="Bagguley C.L."/>
            <person name="Bailey J."/>
            <person name="Beasley H."/>
            <person name="Bethel G."/>
            <person name="Bird C.P."/>
            <person name="Bray-Allen S."/>
            <person name="Brown J.Y."/>
            <person name="Brown A.J."/>
            <person name="Buckley D."/>
            <person name="Burton J."/>
            <person name="Bye J."/>
            <person name="Carder C."/>
            <person name="Chapman J.C."/>
            <person name="Clark S.Y."/>
            <person name="Clarke G."/>
            <person name="Clee C."/>
            <person name="Cobley V."/>
            <person name="Collier R.E."/>
            <person name="Corby N."/>
            <person name="Coville G.J."/>
            <person name="Davies J."/>
            <person name="Deadman R."/>
            <person name="Dunn M."/>
            <person name="Earthrowl M."/>
            <person name="Ellington A.G."/>
            <person name="Errington H."/>
            <person name="Frankish A."/>
            <person name="Frankland J."/>
            <person name="French L."/>
            <person name="Garner P."/>
            <person name="Garnett J."/>
            <person name="Gay L."/>
            <person name="Ghori M.R.J."/>
            <person name="Gibson R."/>
            <person name="Gilby L.M."/>
            <person name="Gillett W."/>
            <person name="Glithero R.J."/>
            <person name="Grafham D.V."/>
            <person name="Griffiths C."/>
            <person name="Griffiths-Jones S."/>
            <person name="Grocock R."/>
            <person name="Hammond S."/>
            <person name="Harrison E.S.I."/>
            <person name="Hart E."/>
            <person name="Haugen E."/>
            <person name="Heath P.D."/>
            <person name="Holmes S."/>
            <person name="Holt K."/>
            <person name="Howden P.J."/>
            <person name="Hunt A.R."/>
            <person name="Hunt S.E."/>
            <person name="Hunter G."/>
            <person name="Isherwood J."/>
            <person name="James R."/>
            <person name="Johnson C."/>
            <person name="Johnson D."/>
            <person name="Joy A."/>
            <person name="Kay M."/>
            <person name="Kershaw J.K."/>
            <person name="Kibukawa M."/>
            <person name="Kimberley A.M."/>
            <person name="King A."/>
            <person name="Knights A.J."/>
            <person name="Lad H."/>
            <person name="Laird G."/>
            <person name="Lawlor S."/>
            <person name="Leongamornlert D.A."/>
            <person name="Lloyd D.M."/>
            <person name="Loveland J."/>
            <person name="Lovell J."/>
            <person name="Lush M.J."/>
            <person name="Lyne R."/>
            <person name="Martin S."/>
            <person name="Mashreghi-Mohammadi M."/>
            <person name="Matthews L."/>
            <person name="Matthews N.S.W."/>
            <person name="McLaren S."/>
            <person name="Milne S."/>
            <person name="Mistry S."/>
            <person name="Moore M.J.F."/>
            <person name="Nickerson T."/>
            <person name="O'Dell C.N."/>
            <person name="Oliver K."/>
            <person name="Palmeiri A."/>
            <person name="Palmer S.A."/>
            <person name="Parker A."/>
            <person name="Patel D."/>
            <person name="Pearce A.V."/>
            <person name="Peck A.I."/>
            <person name="Pelan S."/>
            <person name="Phelps K."/>
            <person name="Phillimore B.J."/>
            <person name="Plumb R."/>
            <person name="Rajan J."/>
            <person name="Raymond C."/>
            <person name="Rouse G."/>
            <person name="Saenphimmachak C."/>
            <person name="Sehra H.K."/>
            <person name="Sheridan E."/>
            <person name="Shownkeen R."/>
            <person name="Sims S."/>
            <person name="Skuce C.D."/>
            <person name="Smith M."/>
            <person name="Steward C."/>
            <person name="Subramanian S."/>
            <person name="Sycamore N."/>
            <person name="Tracey A."/>
            <person name="Tromans A."/>
            <person name="Van Helmond Z."/>
            <person name="Wall M."/>
            <person name="Wallis J.M."/>
            <person name="White S."/>
            <person name="Whitehead S.L."/>
            <person name="Wilkinson J.E."/>
            <person name="Willey D.L."/>
            <person name="Williams H."/>
            <person name="Wilming L."/>
            <person name="Wray P.W."/>
            <person name="Wu Z."/>
            <person name="Coulson A."/>
            <person name="Vaudin M."/>
            <person name="Sulston J.E."/>
            <person name="Durbin R.M."/>
            <person name="Hubbard T."/>
            <person name="Wooster R."/>
            <person name="Dunham I."/>
            <person name="Carter N.P."/>
            <person name="McVean G."/>
            <person name="Ross M.T."/>
            <person name="Harrow J."/>
            <person name="Olson M.V."/>
            <person name="Beck S."/>
            <person name="Rogers J."/>
            <person name="Bentley D.R."/>
        </authorList>
    </citation>
    <scope>NUCLEOTIDE SEQUENCE [LARGE SCALE GENOMIC DNA]</scope>
</reference>
<feature type="chain" id="PRO_0000324639" description="Peptidyl-prolyl cis-trans isomerase A-like 4G">
    <location>
        <begin position="1"/>
        <end position="164"/>
    </location>
</feature>
<feature type="domain" description="PPIase cyclophilin-type" evidence="3">
    <location>
        <begin position="7"/>
        <end position="163"/>
    </location>
</feature>
<comment type="function">
    <text evidence="1">PPIases accelerate the folding of proteins. It catalyzes the cis-trans isomerization of proline imidic peptide bonds in oligopeptides (By similarity).</text>
</comment>
<comment type="catalytic activity">
    <reaction>
        <text>[protein]-peptidylproline (omega=180) = [protein]-peptidylproline (omega=0)</text>
        <dbReference type="Rhea" id="RHEA:16237"/>
        <dbReference type="Rhea" id="RHEA-COMP:10747"/>
        <dbReference type="Rhea" id="RHEA-COMP:10748"/>
        <dbReference type="ChEBI" id="CHEBI:83833"/>
        <dbReference type="ChEBI" id="CHEBI:83834"/>
        <dbReference type="EC" id="5.2.1.8"/>
    </reaction>
</comment>
<comment type="subcellular location">
    <subcellularLocation>
        <location evidence="2">Cytoplasm</location>
    </subcellularLocation>
</comment>
<comment type="miscellaneous">
    <text evidence="4">It is one of six related genes or pseudogenes found in a cluster, thought to result from gene duplication, on chromosome 1.</text>
</comment>
<comment type="similarity">
    <text evidence="4">Belongs to the cyclophilin-type PPIase family. PPIase A subfamily.</text>
</comment>
<gene>
    <name type="primary">PPIAL4G</name>
</gene>
<keyword id="KW-0963">Cytoplasm</keyword>
<keyword id="KW-0413">Isomerase</keyword>
<keyword id="KW-1267">Proteomics identification</keyword>
<keyword id="KW-1185">Reference proteome</keyword>
<keyword id="KW-0697">Rotamase</keyword>
<accession>P0DN37</accession>
<accession>A1L431</accession>
<accession>A2BFH1</accession>
<proteinExistence type="evidence at protein level"/>
<sequence length="164" mass="18166">MVNSVIFFDITVDGKPLGRISIKQFADKIPKTAENFRALSTGEKGFRYKGSCFHRIIPGFMCQGGDFTHPNGTGDKSIYGEKFDDENLIRKHTGSGILSMANAGPNTNGSQFFICTAKTEWLDGKHVAFGKVKERVNIVEAMEHFGYRNSKTSKKITIADCGQF</sequence>
<evidence type="ECO:0000250" key="1"/>
<evidence type="ECO:0000250" key="2">
    <source>
        <dbReference type="UniProtKB" id="P62937"/>
    </source>
</evidence>
<evidence type="ECO:0000255" key="3">
    <source>
        <dbReference type="PROSITE-ProRule" id="PRU00156"/>
    </source>
</evidence>
<evidence type="ECO:0000305" key="4"/>